<gene>
    <name evidence="1" type="primary">purT</name>
    <name type="ordered locus">Ecok1_17060</name>
    <name type="ORF">APECO1_899</name>
</gene>
<sequence>MTLLGTALRPAATRVMLLGSGELGKEVAIECQRLGVEVIAVDRYADAPAMHVAHRSHVINMLDGDALRRVVELEKPHYIVPEIEAIATDMLIQLEEEGLNVVPCARATKLTMNREGIRRLAAEELQLPTSTYRFADSENLFREAVAAIGYPCIVKPVMSSSGKGQTFIRSAEQLAHAWEYAQQGGRAGAGRVIVEGVVKFDFEITLLTVSAVDGVHFCAPVGHRQEDGDYRESWQPQQMSPLALERAQEIARKVVLALGGYGLFGVELFVCGDEVIFSEVSPRPHDTGMVTLISQDLSEFALHVRAFLGLPVGGIRQYGPAASAVILPQLTSQNVTFDNVQNAVGADLQIRLFGKPEIDGSRRLGVALATAESVVDAIERAKHAAGQVKVQG</sequence>
<protein>
    <recommendedName>
        <fullName evidence="1">Formate-dependent phosphoribosylglycinamide formyltransferase</fullName>
        <ecNumber evidence="1">6.3.1.21</ecNumber>
    </recommendedName>
    <alternativeName>
        <fullName evidence="1">5'-phosphoribosylglycinamide transformylase 2</fullName>
    </alternativeName>
    <alternativeName>
        <fullName evidence="1">Formate-dependent GAR transformylase</fullName>
    </alternativeName>
    <alternativeName>
        <fullName evidence="1">GAR transformylase 2</fullName>
        <shortName evidence="1">GART 2</shortName>
    </alternativeName>
    <alternativeName>
        <fullName evidence="1">Non-folate glycinamide ribonucleotide transformylase</fullName>
    </alternativeName>
    <alternativeName>
        <fullName evidence="1">Phosphoribosylglycinamide formyltransferase 2</fullName>
    </alternativeName>
</protein>
<evidence type="ECO:0000255" key="1">
    <source>
        <dbReference type="HAMAP-Rule" id="MF_01643"/>
    </source>
</evidence>
<proteinExistence type="inferred from homology"/>
<name>PURT_ECOK1</name>
<keyword id="KW-0067">ATP-binding</keyword>
<keyword id="KW-0436">Ligase</keyword>
<keyword id="KW-0460">Magnesium</keyword>
<keyword id="KW-0479">Metal-binding</keyword>
<keyword id="KW-0547">Nucleotide-binding</keyword>
<keyword id="KW-0658">Purine biosynthesis</keyword>
<keyword id="KW-1185">Reference proteome</keyword>
<dbReference type="EC" id="6.3.1.21" evidence="1"/>
<dbReference type="EMBL" id="CP000468">
    <property type="protein sequence ID" value="ABJ01200.1"/>
    <property type="molecule type" value="Genomic_DNA"/>
</dbReference>
<dbReference type="RefSeq" id="WP_000173466.1">
    <property type="nucleotide sequence ID" value="NZ_CADILS010000034.1"/>
</dbReference>
<dbReference type="SMR" id="A1AC10"/>
<dbReference type="KEGG" id="ecv:APECO1_899"/>
<dbReference type="HOGENOM" id="CLU_011534_1_3_6"/>
<dbReference type="UniPathway" id="UPA00074">
    <property type="reaction ID" value="UER00127"/>
</dbReference>
<dbReference type="Proteomes" id="UP000008216">
    <property type="component" value="Chromosome"/>
</dbReference>
<dbReference type="GO" id="GO:0005829">
    <property type="term" value="C:cytosol"/>
    <property type="evidence" value="ECO:0007669"/>
    <property type="project" value="TreeGrafter"/>
</dbReference>
<dbReference type="GO" id="GO:0005524">
    <property type="term" value="F:ATP binding"/>
    <property type="evidence" value="ECO:0007669"/>
    <property type="project" value="UniProtKB-UniRule"/>
</dbReference>
<dbReference type="GO" id="GO:0000287">
    <property type="term" value="F:magnesium ion binding"/>
    <property type="evidence" value="ECO:0007669"/>
    <property type="project" value="InterPro"/>
</dbReference>
<dbReference type="GO" id="GO:0043815">
    <property type="term" value="F:phosphoribosylglycinamide formyltransferase 2 activity"/>
    <property type="evidence" value="ECO:0007669"/>
    <property type="project" value="UniProtKB-UniRule"/>
</dbReference>
<dbReference type="GO" id="GO:0004644">
    <property type="term" value="F:phosphoribosylglycinamide formyltransferase activity"/>
    <property type="evidence" value="ECO:0007669"/>
    <property type="project" value="InterPro"/>
</dbReference>
<dbReference type="GO" id="GO:0006189">
    <property type="term" value="P:'de novo' IMP biosynthetic process"/>
    <property type="evidence" value="ECO:0007669"/>
    <property type="project" value="UniProtKB-UniRule"/>
</dbReference>
<dbReference type="FunFam" id="3.30.1490.20:FF:000013">
    <property type="entry name" value="Formate-dependent phosphoribosylglycinamide formyltransferase"/>
    <property type="match status" value="1"/>
</dbReference>
<dbReference type="FunFam" id="3.30.470.20:FF:000027">
    <property type="entry name" value="Formate-dependent phosphoribosylglycinamide formyltransferase"/>
    <property type="match status" value="1"/>
</dbReference>
<dbReference type="FunFam" id="3.40.50.20:FF:000007">
    <property type="entry name" value="Formate-dependent phosphoribosylglycinamide formyltransferase"/>
    <property type="match status" value="1"/>
</dbReference>
<dbReference type="Gene3D" id="3.40.50.20">
    <property type="match status" value="1"/>
</dbReference>
<dbReference type="Gene3D" id="3.30.1490.20">
    <property type="entry name" value="ATP-grasp fold, A domain"/>
    <property type="match status" value="1"/>
</dbReference>
<dbReference type="Gene3D" id="3.30.470.20">
    <property type="entry name" value="ATP-grasp fold, B domain"/>
    <property type="match status" value="1"/>
</dbReference>
<dbReference type="HAMAP" id="MF_01643">
    <property type="entry name" value="PurT"/>
    <property type="match status" value="1"/>
</dbReference>
<dbReference type="InterPro" id="IPR011761">
    <property type="entry name" value="ATP-grasp"/>
</dbReference>
<dbReference type="InterPro" id="IPR003135">
    <property type="entry name" value="ATP-grasp_carboxylate-amine"/>
</dbReference>
<dbReference type="InterPro" id="IPR013815">
    <property type="entry name" value="ATP_grasp_subdomain_1"/>
</dbReference>
<dbReference type="InterPro" id="IPR016185">
    <property type="entry name" value="PreATP-grasp_dom_sf"/>
</dbReference>
<dbReference type="InterPro" id="IPR005862">
    <property type="entry name" value="PurT"/>
</dbReference>
<dbReference type="InterPro" id="IPR054350">
    <property type="entry name" value="PurT/PurK_preATP-grasp"/>
</dbReference>
<dbReference type="InterPro" id="IPR048740">
    <property type="entry name" value="PurT_C"/>
</dbReference>
<dbReference type="InterPro" id="IPR011054">
    <property type="entry name" value="Rudment_hybrid_motif"/>
</dbReference>
<dbReference type="NCBIfam" id="NF006766">
    <property type="entry name" value="PRK09288.1"/>
    <property type="match status" value="1"/>
</dbReference>
<dbReference type="NCBIfam" id="TIGR01142">
    <property type="entry name" value="purT"/>
    <property type="match status" value="1"/>
</dbReference>
<dbReference type="PANTHER" id="PTHR43055">
    <property type="entry name" value="FORMATE-DEPENDENT PHOSPHORIBOSYLGLYCINAMIDE FORMYLTRANSFERASE"/>
    <property type="match status" value="1"/>
</dbReference>
<dbReference type="PANTHER" id="PTHR43055:SF1">
    <property type="entry name" value="FORMATE-DEPENDENT PHOSPHORIBOSYLGLYCINAMIDE FORMYLTRANSFERASE"/>
    <property type="match status" value="1"/>
</dbReference>
<dbReference type="Pfam" id="PF02222">
    <property type="entry name" value="ATP-grasp"/>
    <property type="match status" value="1"/>
</dbReference>
<dbReference type="Pfam" id="PF21244">
    <property type="entry name" value="PurT_C"/>
    <property type="match status" value="1"/>
</dbReference>
<dbReference type="Pfam" id="PF22660">
    <property type="entry name" value="RS_preATP-grasp-like"/>
    <property type="match status" value="1"/>
</dbReference>
<dbReference type="SUPFAM" id="SSF56059">
    <property type="entry name" value="Glutathione synthetase ATP-binding domain-like"/>
    <property type="match status" value="1"/>
</dbReference>
<dbReference type="SUPFAM" id="SSF52440">
    <property type="entry name" value="PreATP-grasp domain"/>
    <property type="match status" value="1"/>
</dbReference>
<dbReference type="SUPFAM" id="SSF51246">
    <property type="entry name" value="Rudiment single hybrid motif"/>
    <property type="match status" value="1"/>
</dbReference>
<dbReference type="PROSITE" id="PS50975">
    <property type="entry name" value="ATP_GRASP"/>
    <property type="match status" value="1"/>
</dbReference>
<accession>A1AC10</accession>
<reference key="1">
    <citation type="journal article" date="2007" name="J. Bacteriol.">
        <title>The genome sequence of avian pathogenic Escherichia coli strain O1:K1:H7 shares strong similarities with human extraintestinal pathogenic E. coli genomes.</title>
        <authorList>
            <person name="Johnson T.J."/>
            <person name="Kariyawasam S."/>
            <person name="Wannemuehler Y."/>
            <person name="Mangiamele P."/>
            <person name="Johnson S.J."/>
            <person name="Doetkott C."/>
            <person name="Skyberg J.A."/>
            <person name="Lynne A.M."/>
            <person name="Johnson J.R."/>
            <person name="Nolan L.K."/>
        </authorList>
    </citation>
    <scope>NUCLEOTIDE SEQUENCE [LARGE SCALE GENOMIC DNA]</scope>
</reference>
<comment type="function">
    <text evidence="1">Involved in the de novo purine biosynthesis. Catalyzes the transfer of formate to 5-phospho-ribosyl-glycinamide (GAR), producing 5-phospho-ribosyl-N-formylglycinamide (FGAR). Formate is provided by PurU via hydrolysis of 10-formyl-tetrahydrofolate.</text>
</comment>
<comment type="catalytic activity">
    <reaction evidence="1">
        <text>N(1)-(5-phospho-beta-D-ribosyl)glycinamide + formate + ATP = N(2)-formyl-N(1)-(5-phospho-beta-D-ribosyl)glycinamide + ADP + phosphate + H(+)</text>
        <dbReference type="Rhea" id="RHEA:24829"/>
        <dbReference type="ChEBI" id="CHEBI:15378"/>
        <dbReference type="ChEBI" id="CHEBI:15740"/>
        <dbReference type="ChEBI" id="CHEBI:30616"/>
        <dbReference type="ChEBI" id="CHEBI:43474"/>
        <dbReference type="ChEBI" id="CHEBI:143788"/>
        <dbReference type="ChEBI" id="CHEBI:147286"/>
        <dbReference type="ChEBI" id="CHEBI:456216"/>
        <dbReference type="EC" id="6.3.1.21"/>
    </reaction>
    <physiologicalReaction direction="left-to-right" evidence="1">
        <dbReference type="Rhea" id="RHEA:24830"/>
    </physiologicalReaction>
</comment>
<comment type="pathway">
    <text evidence="1">Purine metabolism; IMP biosynthesis via de novo pathway; N(2)-formyl-N(1)-(5-phospho-D-ribosyl)glycinamide from N(1)-(5-phospho-D-ribosyl)glycinamide (formate route): step 1/1.</text>
</comment>
<comment type="subunit">
    <text evidence="1">Homodimer.</text>
</comment>
<comment type="similarity">
    <text evidence="1">Belongs to the PurK/PurT family.</text>
</comment>
<organism>
    <name type="scientific">Escherichia coli O1:K1 / APEC</name>
    <dbReference type="NCBI Taxonomy" id="405955"/>
    <lineage>
        <taxon>Bacteria</taxon>
        <taxon>Pseudomonadati</taxon>
        <taxon>Pseudomonadota</taxon>
        <taxon>Gammaproteobacteria</taxon>
        <taxon>Enterobacterales</taxon>
        <taxon>Enterobacteriaceae</taxon>
        <taxon>Escherichia</taxon>
    </lineage>
</organism>
<feature type="chain" id="PRO_0000319164" description="Formate-dependent phosphoribosylglycinamide formyltransferase">
    <location>
        <begin position="1"/>
        <end position="392"/>
    </location>
</feature>
<feature type="domain" description="ATP-grasp" evidence="1">
    <location>
        <begin position="119"/>
        <end position="308"/>
    </location>
</feature>
<feature type="binding site" evidence="1">
    <location>
        <begin position="22"/>
        <end position="23"/>
    </location>
    <ligand>
        <name>N(1)-(5-phospho-beta-D-ribosyl)glycinamide</name>
        <dbReference type="ChEBI" id="CHEBI:143788"/>
    </ligand>
</feature>
<feature type="binding site" evidence="1">
    <location>
        <position position="82"/>
    </location>
    <ligand>
        <name>N(1)-(5-phospho-beta-D-ribosyl)glycinamide</name>
        <dbReference type="ChEBI" id="CHEBI:143788"/>
    </ligand>
</feature>
<feature type="binding site" evidence="1">
    <location>
        <position position="114"/>
    </location>
    <ligand>
        <name>ATP</name>
        <dbReference type="ChEBI" id="CHEBI:30616"/>
    </ligand>
</feature>
<feature type="binding site" evidence="1">
    <location>
        <position position="155"/>
    </location>
    <ligand>
        <name>ATP</name>
        <dbReference type="ChEBI" id="CHEBI:30616"/>
    </ligand>
</feature>
<feature type="binding site" evidence="1">
    <location>
        <begin position="160"/>
        <end position="165"/>
    </location>
    <ligand>
        <name>ATP</name>
        <dbReference type="ChEBI" id="CHEBI:30616"/>
    </ligand>
</feature>
<feature type="binding site" evidence="1">
    <location>
        <begin position="195"/>
        <end position="198"/>
    </location>
    <ligand>
        <name>ATP</name>
        <dbReference type="ChEBI" id="CHEBI:30616"/>
    </ligand>
</feature>
<feature type="binding site" evidence="1">
    <location>
        <position position="203"/>
    </location>
    <ligand>
        <name>ATP</name>
        <dbReference type="ChEBI" id="CHEBI:30616"/>
    </ligand>
</feature>
<feature type="binding site" evidence="1">
    <location>
        <position position="267"/>
    </location>
    <ligand>
        <name>Mg(2+)</name>
        <dbReference type="ChEBI" id="CHEBI:18420"/>
    </ligand>
</feature>
<feature type="binding site" evidence="1">
    <location>
        <position position="279"/>
    </location>
    <ligand>
        <name>Mg(2+)</name>
        <dbReference type="ChEBI" id="CHEBI:18420"/>
    </ligand>
</feature>
<feature type="binding site" evidence="1">
    <location>
        <position position="286"/>
    </location>
    <ligand>
        <name>N(1)-(5-phospho-beta-D-ribosyl)glycinamide</name>
        <dbReference type="ChEBI" id="CHEBI:143788"/>
    </ligand>
</feature>
<feature type="binding site" evidence="1">
    <location>
        <position position="355"/>
    </location>
    <ligand>
        <name>N(1)-(5-phospho-beta-D-ribosyl)glycinamide</name>
        <dbReference type="ChEBI" id="CHEBI:143788"/>
    </ligand>
</feature>
<feature type="binding site" evidence="1">
    <location>
        <begin position="362"/>
        <end position="363"/>
    </location>
    <ligand>
        <name>N(1)-(5-phospho-beta-D-ribosyl)glycinamide</name>
        <dbReference type="ChEBI" id="CHEBI:143788"/>
    </ligand>
</feature>